<sequence>MHPQAVRPSETLKAFGDKLSMIGVTRITEITHLDRIGIPVFSAIRPTAEDGAVSIYAGKGATRTQARASAMMEAFERYSAERKPEDETFTAHPEDCDGLDPESLILPGSTDLKSELEWINAENLTGDEEVPVPANAVFHPYNPPEGCMSLFRSNTNGLASGNAREEAIFHGLMEVIERDAWSLFEARRGPKVEVDCSGTDNDIISGLLEKFHAAGVEVTLVDLTADTGVATVAAVADDTVLRDPALLTMGVGTHLDPEIAVIRALTEVAQSRATQIHGTREDTVRAEFMRRAGYERMKRLNRHWFSEPEDTITLDEMEDLSTRSFRGDLEITLRKLRESGLEDVFYVDLTRDVGVPVVRVIVPGLEVFSVDPERVGRRIRSSI</sequence>
<dbReference type="EMBL" id="AE000666">
    <property type="protein sequence ID" value="AAB85484.1"/>
    <property type="molecule type" value="Genomic_DNA"/>
</dbReference>
<dbReference type="PIR" id="B69232">
    <property type="entry name" value="B69232"/>
</dbReference>
<dbReference type="SMR" id="O27068"/>
<dbReference type="STRING" id="187420.MTH_987"/>
<dbReference type="PaxDb" id="187420-MTH_987"/>
<dbReference type="EnsemblBacteria" id="AAB85484">
    <property type="protein sequence ID" value="AAB85484"/>
    <property type="gene ID" value="MTH_987"/>
</dbReference>
<dbReference type="KEGG" id="mth:MTH_987"/>
<dbReference type="PATRIC" id="fig|187420.15.peg.970"/>
<dbReference type="HOGENOM" id="CLU_056369_0_0_2"/>
<dbReference type="InParanoid" id="O27068"/>
<dbReference type="Proteomes" id="UP000005223">
    <property type="component" value="Chromosome"/>
</dbReference>
<dbReference type="Gene3D" id="3.30.1330.230">
    <property type="match status" value="2"/>
</dbReference>
<dbReference type="InterPro" id="IPR017667">
    <property type="entry name" value="Methan_mark_1"/>
</dbReference>
<dbReference type="InterPro" id="IPR003776">
    <property type="entry name" value="YcaO-like_dom"/>
</dbReference>
<dbReference type="NCBIfam" id="TIGR03266">
    <property type="entry name" value="methan_mark_1"/>
    <property type="match status" value="1"/>
</dbReference>
<dbReference type="NCBIfam" id="TIGR00702">
    <property type="entry name" value="YcaO-type kinase domain"/>
    <property type="match status" value="1"/>
</dbReference>
<dbReference type="PANTHER" id="PTHR37809">
    <property type="entry name" value="RIBOSOMAL PROTEIN S12 METHYLTHIOTRANSFERASE ACCESSORY FACTOR YCAO"/>
    <property type="match status" value="1"/>
</dbReference>
<dbReference type="PANTHER" id="PTHR37809:SF1">
    <property type="entry name" value="RIBOSOMAL PROTEIN S12 METHYLTHIOTRANSFERASE ACCESSORY FACTOR YCAO"/>
    <property type="match status" value="1"/>
</dbReference>
<dbReference type="Pfam" id="PF02624">
    <property type="entry name" value="YcaO"/>
    <property type="match status" value="1"/>
</dbReference>
<dbReference type="PROSITE" id="PS51664">
    <property type="entry name" value="YCAO"/>
    <property type="match status" value="1"/>
</dbReference>
<organism>
    <name type="scientific">Methanothermobacter thermautotrophicus (strain ATCC 29096 / DSM 1053 / JCM 10044 / NBRC 100330 / Delta H)</name>
    <name type="common">Methanobacterium thermoautotrophicum</name>
    <dbReference type="NCBI Taxonomy" id="187420"/>
    <lineage>
        <taxon>Archaea</taxon>
        <taxon>Methanobacteriati</taxon>
        <taxon>Methanobacteriota</taxon>
        <taxon>Methanomada group</taxon>
        <taxon>Methanobacteria</taxon>
        <taxon>Methanobacteriales</taxon>
        <taxon>Methanobacteriaceae</taxon>
        <taxon>Methanothermobacter</taxon>
    </lineage>
</organism>
<reference key="1">
    <citation type="journal article" date="1997" name="J. Bacteriol.">
        <title>Complete genome sequence of Methanobacterium thermoautotrophicum deltaH: functional analysis and comparative genomics.</title>
        <authorList>
            <person name="Smith D.R."/>
            <person name="Doucette-Stamm L.A."/>
            <person name="Deloughery C."/>
            <person name="Lee H.-M."/>
            <person name="Dubois J."/>
            <person name="Aldredge T."/>
            <person name="Bashirzadeh R."/>
            <person name="Blakely D."/>
            <person name="Cook R."/>
            <person name="Gilbert K."/>
            <person name="Harrison D."/>
            <person name="Hoang L."/>
            <person name="Keagle P."/>
            <person name="Lumm W."/>
            <person name="Pothier B."/>
            <person name="Qiu D."/>
            <person name="Spadafora R."/>
            <person name="Vicare R."/>
            <person name="Wang Y."/>
            <person name="Wierzbowski J."/>
            <person name="Gibson R."/>
            <person name="Jiwani N."/>
            <person name="Caruso A."/>
            <person name="Bush D."/>
            <person name="Safer H."/>
            <person name="Patwell D."/>
            <person name="Prabhakar S."/>
            <person name="McDougall S."/>
            <person name="Shimer G."/>
            <person name="Goyal A."/>
            <person name="Pietrovski S."/>
            <person name="Church G.M."/>
            <person name="Daniels C.J."/>
            <person name="Mao J.-I."/>
            <person name="Rice P."/>
            <person name="Noelling J."/>
            <person name="Reeve J.N."/>
        </authorList>
    </citation>
    <scope>NUCLEOTIDE SEQUENCE [LARGE SCALE GENOMIC DNA]</scope>
    <source>
        <strain>ATCC 29096 / DSM 1053 / JCM 10044 / NBRC 100330 / Delta H</strain>
    </source>
</reference>
<protein>
    <recommendedName>
        <fullName>Uncharacterized protein MTH_987</fullName>
    </recommendedName>
</protein>
<accession>O27068</accession>
<name>Y987_METTH</name>
<feature type="chain" id="PRO_0000144981" description="Uncharacterized protein MTH_987">
    <location>
        <begin position="1"/>
        <end position="383"/>
    </location>
</feature>
<feature type="domain" description="YcaO" evidence="1">
    <location>
        <begin position="58"/>
        <end position="383"/>
    </location>
</feature>
<feature type="region of interest" description="Disordered" evidence="2">
    <location>
        <begin position="80"/>
        <end position="100"/>
    </location>
</feature>
<proteinExistence type="predicted"/>
<evidence type="ECO:0000255" key="1">
    <source>
        <dbReference type="PROSITE-ProRule" id="PRU00999"/>
    </source>
</evidence>
<evidence type="ECO:0000256" key="2">
    <source>
        <dbReference type="SAM" id="MobiDB-lite"/>
    </source>
</evidence>
<keyword id="KW-1185">Reference proteome</keyword>
<gene>
    <name type="ordered locus">MTH_987</name>
</gene>